<protein>
    <recommendedName>
        <fullName evidence="1">Bifunctional protein FolD</fullName>
    </recommendedName>
    <domain>
        <recommendedName>
            <fullName evidence="1">Methylenetetrahydrofolate dehydrogenase</fullName>
            <ecNumber evidence="1">1.5.1.5</ecNumber>
        </recommendedName>
    </domain>
    <domain>
        <recommendedName>
            <fullName evidence="1">Methenyltetrahydrofolate cyclohydrolase</fullName>
            <ecNumber evidence="1">3.5.4.9</ecNumber>
        </recommendedName>
    </domain>
</protein>
<keyword id="KW-0028">Amino-acid biosynthesis</keyword>
<keyword id="KW-0368">Histidine biosynthesis</keyword>
<keyword id="KW-0378">Hydrolase</keyword>
<keyword id="KW-0486">Methionine biosynthesis</keyword>
<keyword id="KW-0511">Multifunctional enzyme</keyword>
<keyword id="KW-0521">NADP</keyword>
<keyword id="KW-0554">One-carbon metabolism</keyword>
<keyword id="KW-0560">Oxidoreductase</keyword>
<keyword id="KW-0658">Purine biosynthesis</keyword>
<name>FOLD_BACCN</name>
<proteinExistence type="inferred from homology"/>
<sequence>MVAVIIKGNEVAEKKRAQLKEEVVKLKEQGIVPGLAVILVGEDPASRSYIKGKQKGCEQVGIYSELIEFPDTITEERLLAEIDRLNEDDRINGILVQLPLPKHIEEKAIIERISPKKDVDGFHPINIGRMMTGQDTFLPCTPHGILELVKETNIDISGKHVVVIGRSNIVGKPVGQLFLNENATVTYCHSKTKNIKELSKLADILVVAVGRPKMVTADYIKEGAVVIDVGVNRLETGKLCGDVDFENVLDIAGYITPVPKGVGPMTITMLLHNTVESAKRAGFICK</sequence>
<gene>
    <name evidence="1" type="primary">folD</name>
    <name type="ordered locus">Bcer98_2874</name>
</gene>
<reference key="1">
    <citation type="journal article" date="2008" name="Chem. Biol. Interact.">
        <title>Extending the Bacillus cereus group genomics to putative food-borne pathogens of different toxicity.</title>
        <authorList>
            <person name="Lapidus A."/>
            <person name="Goltsman E."/>
            <person name="Auger S."/>
            <person name="Galleron N."/>
            <person name="Segurens B."/>
            <person name="Dossat C."/>
            <person name="Land M.L."/>
            <person name="Broussolle V."/>
            <person name="Brillard J."/>
            <person name="Guinebretiere M.-H."/>
            <person name="Sanchis V."/>
            <person name="Nguen-the C."/>
            <person name="Lereclus D."/>
            <person name="Richardson P."/>
            <person name="Wincker P."/>
            <person name="Weissenbach J."/>
            <person name="Ehrlich S.D."/>
            <person name="Sorokin A."/>
        </authorList>
    </citation>
    <scope>NUCLEOTIDE SEQUENCE [LARGE SCALE GENOMIC DNA]</scope>
    <source>
        <strain>DSM 22905 / CIP 110041 / 391-98 / NVH 391-98</strain>
    </source>
</reference>
<accession>A7GSJ9</accession>
<dbReference type="EC" id="1.5.1.5" evidence="1"/>
<dbReference type="EC" id="3.5.4.9" evidence="1"/>
<dbReference type="EMBL" id="CP000764">
    <property type="protein sequence ID" value="ABS23107.1"/>
    <property type="molecule type" value="Genomic_DNA"/>
</dbReference>
<dbReference type="RefSeq" id="WP_012095334.1">
    <property type="nucleotide sequence ID" value="NC_009674.1"/>
</dbReference>
<dbReference type="SMR" id="A7GSJ9"/>
<dbReference type="STRING" id="315749.Bcer98_2874"/>
<dbReference type="GeneID" id="33898127"/>
<dbReference type="KEGG" id="bcy:Bcer98_2874"/>
<dbReference type="eggNOG" id="COG0190">
    <property type="taxonomic scope" value="Bacteria"/>
</dbReference>
<dbReference type="HOGENOM" id="CLU_034045_2_1_9"/>
<dbReference type="OrthoDB" id="9803580at2"/>
<dbReference type="UniPathway" id="UPA00193"/>
<dbReference type="Proteomes" id="UP000002300">
    <property type="component" value="Chromosome"/>
</dbReference>
<dbReference type="GO" id="GO:0005829">
    <property type="term" value="C:cytosol"/>
    <property type="evidence" value="ECO:0007669"/>
    <property type="project" value="TreeGrafter"/>
</dbReference>
<dbReference type="GO" id="GO:0004477">
    <property type="term" value="F:methenyltetrahydrofolate cyclohydrolase activity"/>
    <property type="evidence" value="ECO:0007669"/>
    <property type="project" value="UniProtKB-UniRule"/>
</dbReference>
<dbReference type="GO" id="GO:0004488">
    <property type="term" value="F:methylenetetrahydrofolate dehydrogenase (NADP+) activity"/>
    <property type="evidence" value="ECO:0007669"/>
    <property type="project" value="UniProtKB-UniRule"/>
</dbReference>
<dbReference type="GO" id="GO:0000105">
    <property type="term" value="P:L-histidine biosynthetic process"/>
    <property type="evidence" value="ECO:0007669"/>
    <property type="project" value="UniProtKB-KW"/>
</dbReference>
<dbReference type="GO" id="GO:0009086">
    <property type="term" value="P:methionine biosynthetic process"/>
    <property type="evidence" value="ECO:0007669"/>
    <property type="project" value="UniProtKB-KW"/>
</dbReference>
<dbReference type="GO" id="GO:0006164">
    <property type="term" value="P:purine nucleotide biosynthetic process"/>
    <property type="evidence" value="ECO:0007669"/>
    <property type="project" value="UniProtKB-KW"/>
</dbReference>
<dbReference type="GO" id="GO:0035999">
    <property type="term" value="P:tetrahydrofolate interconversion"/>
    <property type="evidence" value="ECO:0007669"/>
    <property type="project" value="UniProtKB-UniRule"/>
</dbReference>
<dbReference type="CDD" id="cd01080">
    <property type="entry name" value="NAD_bind_m-THF_DH_Cyclohyd"/>
    <property type="match status" value="1"/>
</dbReference>
<dbReference type="FunFam" id="3.40.50.10860:FF:000001">
    <property type="entry name" value="Bifunctional protein FolD"/>
    <property type="match status" value="1"/>
</dbReference>
<dbReference type="FunFam" id="3.40.50.720:FF:000006">
    <property type="entry name" value="Bifunctional protein FolD"/>
    <property type="match status" value="1"/>
</dbReference>
<dbReference type="Gene3D" id="3.40.50.10860">
    <property type="entry name" value="Leucine Dehydrogenase, chain A, domain 1"/>
    <property type="match status" value="1"/>
</dbReference>
<dbReference type="Gene3D" id="3.40.50.720">
    <property type="entry name" value="NAD(P)-binding Rossmann-like Domain"/>
    <property type="match status" value="1"/>
</dbReference>
<dbReference type="HAMAP" id="MF_01576">
    <property type="entry name" value="THF_DHG_CYH"/>
    <property type="match status" value="1"/>
</dbReference>
<dbReference type="InterPro" id="IPR046346">
    <property type="entry name" value="Aminoacid_DH-like_N_sf"/>
</dbReference>
<dbReference type="InterPro" id="IPR036291">
    <property type="entry name" value="NAD(P)-bd_dom_sf"/>
</dbReference>
<dbReference type="InterPro" id="IPR000672">
    <property type="entry name" value="THF_DH/CycHdrlase"/>
</dbReference>
<dbReference type="InterPro" id="IPR020630">
    <property type="entry name" value="THF_DH/CycHdrlase_cat_dom"/>
</dbReference>
<dbReference type="InterPro" id="IPR020867">
    <property type="entry name" value="THF_DH/CycHdrlase_CS"/>
</dbReference>
<dbReference type="InterPro" id="IPR020631">
    <property type="entry name" value="THF_DH/CycHdrlase_NAD-bd_dom"/>
</dbReference>
<dbReference type="NCBIfam" id="NF008058">
    <property type="entry name" value="PRK10792.1"/>
    <property type="match status" value="1"/>
</dbReference>
<dbReference type="NCBIfam" id="NF010783">
    <property type="entry name" value="PRK14186.1"/>
    <property type="match status" value="1"/>
</dbReference>
<dbReference type="PANTHER" id="PTHR48099:SF5">
    <property type="entry name" value="C-1-TETRAHYDROFOLATE SYNTHASE, CYTOPLASMIC"/>
    <property type="match status" value="1"/>
</dbReference>
<dbReference type="PANTHER" id="PTHR48099">
    <property type="entry name" value="C-1-TETRAHYDROFOLATE SYNTHASE, CYTOPLASMIC-RELATED"/>
    <property type="match status" value="1"/>
</dbReference>
<dbReference type="Pfam" id="PF00763">
    <property type="entry name" value="THF_DHG_CYH"/>
    <property type="match status" value="1"/>
</dbReference>
<dbReference type="Pfam" id="PF02882">
    <property type="entry name" value="THF_DHG_CYH_C"/>
    <property type="match status" value="1"/>
</dbReference>
<dbReference type="PRINTS" id="PR00085">
    <property type="entry name" value="THFDHDRGNASE"/>
</dbReference>
<dbReference type="SUPFAM" id="SSF53223">
    <property type="entry name" value="Aminoacid dehydrogenase-like, N-terminal domain"/>
    <property type="match status" value="1"/>
</dbReference>
<dbReference type="SUPFAM" id="SSF51735">
    <property type="entry name" value="NAD(P)-binding Rossmann-fold domains"/>
    <property type="match status" value="1"/>
</dbReference>
<dbReference type="PROSITE" id="PS00767">
    <property type="entry name" value="THF_DHG_CYH_2"/>
    <property type="match status" value="1"/>
</dbReference>
<feature type="chain" id="PRO_1000087888" description="Bifunctional protein FolD">
    <location>
        <begin position="1"/>
        <end position="286"/>
    </location>
</feature>
<feature type="binding site" evidence="1">
    <location>
        <begin position="165"/>
        <end position="167"/>
    </location>
    <ligand>
        <name>NADP(+)</name>
        <dbReference type="ChEBI" id="CHEBI:58349"/>
    </ligand>
</feature>
<feature type="binding site" evidence="1">
    <location>
        <position position="190"/>
    </location>
    <ligand>
        <name>NADP(+)</name>
        <dbReference type="ChEBI" id="CHEBI:58349"/>
    </ligand>
</feature>
<feature type="binding site" evidence="1">
    <location>
        <position position="231"/>
    </location>
    <ligand>
        <name>NADP(+)</name>
        <dbReference type="ChEBI" id="CHEBI:58349"/>
    </ligand>
</feature>
<evidence type="ECO:0000255" key="1">
    <source>
        <dbReference type="HAMAP-Rule" id="MF_01576"/>
    </source>
</evidence>
<organism>
    <name type="scientific">Bacillus cytotoxicus (strain DSM 22905 / CIP 110041 / 391-98 / NVH 391-98)</name>
    <dbReference type="NCBI Taxonomy" id="315749"/>
    <lineage>
        <taxon>Bacteria</taxon>
        <taxon>Bacillati</taxon>
        <taxon>Bacillota</taxon>
        <taxon>Bacilli</taxon>
        <taxon>Bacillales</taxon>
        <taxon>Bacillaceae</taxon>
        <taxon>Bacillus</taxon>
        <taxon>Bacillus cereus group</taxon>
    </lineage>
</organism>
<comment type="function">
    <text evidence="1">Catalyzes the oxidation of 5,10-methylenetetrahydrofolate to 5,10-methenyltetrahydrofolate and then the hydrolysis of 5,10-methenyltetrahydrofolate to 10-formyltetrahydrofolate.</text>
</comment>
<comment type="catalytic activity">
    <reaction evidence="1">
        <text>(6R)-5,10-methylene-5,6,7,8-tetrahydrofolate + NADP(+) = (6R)-5,10-methenyltetrahydrofolate + NADPH</text>
        <dbReference type="Rhea" id="RHEA:22812"/>
        <dbReference type="ChEBI" id="CHEBI:15636"/>
        <dbReference type="ChEBI" id="CHEBI:57455"/>
        <dbReference type="ChEBI" id="CHEBI:57783"/>
        <dbReference type="ChEBI" id="CHEBI:58349"/>
        <dbReference type="EC" id="1.5.1.5"/>
    </reaction>
</comment>
<comment type="catalytic activity">
    <reaction evidence="1">
        <text>(6R)-5,10-methenyltetrahydrofolate + H2O = (6R)-10-formyltetrahydrofolate + H(+)</text>
        <dbReference type="Rhea" id="RHEA:23700"/>
        <dbReference type="ChEBI" id="CHEBI:15377"/>
        <dbReference type="ChEBI" id="CHEBI:15378"/>
        <dbReference type="ChEBI" id="CHEBI:57455"/>
        <dbReference type="ChEBI" id="CHEBI:195366"/>
        <dbReference type="EC" id="3.5.4.9"/>
    </reaction>
</comment>
<comment type="pathway">
    <text evidence="1">One-carbon metabolism; tetrahydrofolate interconversion.</text>
</comment>
<comment type="subunit">
    <text evidence="1">Homodimer.</text>
</comment>
<comment type="similarity">
    <text evidence="1">Belongs to the tetrahydrofolate dehydrogenase/cyclohydrolase family.</text>
</comment>